<protein>
    <recommendedName>
        <fullName evidence="1">Sulfur carrier protein TusA</fullName>
    </recommendedName>
</protein>
<organism>
    <name type="scientific">Vibrio parahaemolyticus serotype O3:K6 (strain RIMD 2210633)</name>
    <dbReference type="NCBI Taxonomy" id="223926"/>
    <lineage>
        <taxon>Bacteria</taxon>
        <taxon>Pseudomonadati</taxon>
        <taxon>Pseudomonadota</taxon>
        <taxon>Gammaproteobacteria</taxon>
        <taxon>Vibrionales</taxon>
        <taxon>Vibrionaceae</taxon>
        <taxon>Vibrio</taxon>
    </lineage>
</organism>
<evidence type="ECO:0000255" key="1">
    <source>
        <dbReference type="HAMAP-Rule" id="MF_00413"/>
    </source>
</evidence>
<accession>Q87TP4</accession>
<sequence>MSFNPELATKTLEAEGLRCPEPVMMVRKTIRNMQDGEVLLVKADDPSTTRDIPSFCRFMDHQLIAAQTEQLPYQYLIKKGLE</sequence>
<name>TUSA_VIBPA</name>
<feature type="chain" id="PRO_0000159057" description="Sulfur carrier protein TusA">
    <location>
        <begin position="1"/>
        <end position="82"/>
    </location>
</feature>
<feature type="active site" description="Cysteine persulfide intermediate" evidence="1">
    <location>
        <position position="19"/>
    </location>
</feature>
<gene>
    <name evidence="1" type="primary">tusA</name>
    <name type="ordered locus">VP0025</name>
</gene>
<keyword id="KW-0963">Cytoplasm</keyword>
<dbReference type="EMBL" id="BA000031">
    <property type="protein sequence ID" value="BAC58288.1"/>
    <property type="molecule type" value="Genomic_DNA"/>
</dbReference>
<dbReference type="RefSeq" id="NP_796404.1">
    <property type="nucleotide sequence ID" value="NC_004603.1"/>
</dbReference>
<dbReference type="RefSeq" id="WP_005426051.1">
    <property type="nucleotide sequence ID" value="NC_004603.1"/>
</dbReference>
<dbReference type="SMR" id="Q87TP4"/>
<dbReference type="GeneID" id="83583400"/>
<dbReference type="KEGG" id="vpa:VP0025"/>
<dbReference type="PATRIC" id="fig|223926.6.peg.25"/>
<dbReference type="eggNOG" id="COG0425">
    <property type="taxonomic scope" value="Bacteria"/>
</dbReference>
<dbReference type="HOGENOM" id="CLU_165255_5_1_6"/>
<dbReference type="Proteomes" id="UP000002493">
    <property type="component" value="Chromosome 1"/>
</dbReference>
<dbReference type="GO" id="GO:0005737">
    <property type="term" value="C:cytoplasm"/>
    <property type="evidence" value="ECO:0007669"/>
    <property type="project" value="UniProtKB-SubCell"/>
</dbReference>
<dbReference type="GO" id="GO:0097163">
    <property type="term" value="F:sulfur carrier activity"/>
    <property type="evidence" value="ECO:0007669"/>
    <property type="project" value="UniProtKB-UniRule"/>
</dbReference>
<dbReference type="GO" id="GO:0002143">
    <property type="term" value="P:tRNA wobble position uridine thiolation"/>
    <property type="evidence" value="ECO:0007669"/>
    <property type="project" value="InterPro"/>
</dbReference>
<dbReference type="CDD" id="cd03423">
    <property type="entry name" value="SirA"/>
    <property type="match status" value="1"/>
</dbReference>
<dbReference type="Gene3D" id="3.30.110.40">
    <property type="entry name" value="TusA-like domain"/>
    <property type="match status" value="1"/>
</dbReference>
<dbReference type="HAMAP" id="MF_00413">
    <property type="entry name" value="Thiourid_synth_A"/>
    <property type="match status" value="1"/>
</dbReference>
<dbReference type="InterPro" id="IPR022931">
    <property type="entry name" value="Sulphur_carrier_TusA"/>
</dbReference>
<dbReference type="InterPro" id="IPR001455">
    <property type="entry name" value="TusA-like"/>
</dbReference>
<dbReference type="InterPro" id="IPR036868">
    <property type="entry name" value="TusA-like_sf"/>
</dbReference>
<dbReference type="NCBIfam" id="NF001423">
    <property type="entry name" value="PRK00299.1"/>
    <property type="match status" value="1"/>
</dbReference>
<dbReference type="PANTHER" id="PTHR33279:SF2">
    <property type="entry name" value="SULFUR CARRIER PROTEIN TUSA"/>
    <property type="match status" value="1"/>
</dbReference>
<dbReference type="PANTHER" id="PTHR33279">
    <property type="entry name" value="SULFUR CARRIER PROTEIN YEDF-RELATED"/>
    <property type="match status" value="1"/>
</dbReference>
<dbReference type="Pfam" id="PF01206">
    <property type="entry name" value="TusA"/>
    <property type="match status" value="1"/>
</dbReference>
<dbReference type="SUPFAM" id="SSF64307">
    <property type="entry name" value="SirA-like"/>
    <property type="match status" value="1"/>
</dbReference>
<dbReference type="PROSITE" id="PS01148">
    <property type="entry name" value="UPF0033"/>
    <property type="match status" value="1"/>
</dbReference>
<reference key="1">
    <citation type="journal article" date="2003" name="Lancet">
        <title>Genome sequence of Vibrio parahaemolyticus: a pathogenic mechanism distinct from that of V. cholerae.</title>
        <authorList>
            <person name="Makino K."/>
            <person name="Oshima K."/>
            <person name="Kurokawa K."/>
            <person name="Yokoyama K."/>
            <person name="Uda T."/>
            <person name="Tagomori K."/>
            <person name="Iijima Y."/>
            <person name="Najima M."/>
            <person name="Nakano M."/>
            <person name="Yamashita A."/>
            <person name="Kubota Y."/>
            <person name="Kimura S."/>
            <person name="Yasunaga T."/>
            <person name="Honda T."/>
            <person name="Shinagawa H."/>
            <person name="Hattori M."/>
            <person name="Iida T."/>
        </authorList>
    </citation>
    <scope>NUCLEOTIDE SEQUENCE [LARGE SCALE GENOMIC DNA]</scope>
    <source>
        <strain>RIMD 2210633</strain>
    </source>
</reference>
<comment type="function">
    <text evidence="1">Sulfur carrier protein which probably makes part of a sulfur-relay system.</text>
</comment>
<comment type="subcellular location">
    <subcellularLocation>
        <location evidence="1">Cytoplasm</location>
    </subcellularLocation>
</comment>
<comment type="similarity">
    <text evidence="1">Belongs to the sulfur carrier protein TusA family.</text>
</comment>
<proteinExistence type="inferred from homology"/>